<name>GUC2C_MOUSE</name>
<sequence>MTSLLGLAVRLLLFQPALMVFWASQVRQNCRNGSYEISVLMMDNSAYKEPMQNLREAVEEGLDIVRKRLREADLNVTVNATFIYSDGLIHKSGDCRSSTCEGLDLLREITRDHKMGCALMGPSCTYSTFQMYLDTELNYPMISAGSYGLSCDYKETLTRILPPARKLMYFLVDFWKVNNASFKPFSWNSSYVYKNGSEPEDCFWYLNALEAGVSYFSEVLNFKDVLRRSEQFQEILTGHNRKSNVIVMCGTPESFYDVKGDLQVAEDTVVILVDLFSNHYFEENTTAPEYMDNVLVLTLPSEQSTSNTSVAERFSSGRSDFSLAYLEGTLLFGHMLQTFLENGENVTGPKFARAFRNLTFQGFAGPVTLDDSGDIDNIMSLLYVSLDTRKYKVLMKYDTHKNKTIPVAENPNFIWKNHKLPNDVPGLGPQILMIAVFTLTGILVVLLLIALLVLRKYRRDHALRQKKWSHIPSENIFPLETNETNHISLKIDDDRRRDTIQRVRQCKYDKKKVILKDLKHSDGNFSEKQKIDLNKLLQSDYYNLTKFYGTVKLDTRIFGVVEYCERGSLREVLNDTISYPDGTFMDWEFKISVLNDIAKGMSYLHSSKIEVHGRLKSTNCVVDSRMVVKITDFGCNSILPPKKDLWTAPEHLRQATISQKGDVYSFAIIAQEIILRKETFYTLSCRDHNEKIFRVENSYGKPFRPDLFLETADEKELEVYLLVKSCWEEDPEKRPDFKKIESTLAKIFGLFHDQKNESYMDTLIRRLQLYSRNLEHLVEERTQLYKAERDRADHLNFMLLPRLVVKSLKEKGIVEPELYEEVTIYFSDIVGFTTICKYSTPMEVVDMLNDIYKSFDQIVDHHDVYKVETIGDAYVVASGLPMRNGNRHAVDISKMALDILSFIGTFELEHLPGLPVWIRIGVHSGPCAAGVVGIKMPRYCLFGDTVNTASRMESTGLPLRIHMSSSTITILKRTDCQFLYEVRGETYLKGRGTETTYWLTGMKDQEYNLPSPPTVENQQRLQTEFSDMIVSALQKRQASGKKSRRPTRVASYKKGFLEYMQLNNSDHDSTYF</sequence>
<evidence type="ECO:0000250" key="1">
    <source>
        <dbReference type="UniProtKB" id="P25092"/>
    </source>
</evidence>
<evidence type="ECO:0000255" key="2"/>
<evidence type="ECO:0000255" key="3">
    <source>
        <dbReference type="PROSITE-ProRule" id="PRU00099"/>
    </source>
</evidence>
<evidence type="ECO:0000255" key="4">
    <source>
        <dbReference type="PROSITE-ProRule" id="PRU00159"/>
    </source>
</evidence>
<evidence type="ECO:0000303" key="5">
    <source>
    </source>
</evidence>
<evidence type="ECO:0000305" key="6"/>
<gene>
    <name type="primary">Gucy2c</name>
    <name type="synonym">Guc2c</name>
</gene>
<reference key="1">
    <citation type="journal article" date="2005" name="Science">
        <title>The transcriptional landscape of the mammalian genome.</title>
        <authorList>
            <person name="Carninci P."/>
            <person name="Kasukawa T."/>
            <person name="Katayama S."/>
            <person name="Gough J."/>
            <person name="Frith M.C."/>
            <person name="Maeda N."/>
            <person name="Oyama R."/>
            <person name="Ravasi T."/>
            <person name="Lenhard B."/>
            <person name="Wells C."/>
            <person name="Kodzius R."/>
            <person name="Shimokawa K."/>
            <person name="Bajic V.B."/>
            <person name="Brenner S.E."/>
            <person name="Batalov S."/>
            <person name="Forrest A.R."/>
            <person name="Zavolan M."/>
            <person name="Davis M.J."/>
            <person name="Wilming L.G."/>
            <person name="Aidinis V."/>
            <person name="Allen J.E."/>
            <person name="Ambesi-Impiombato A."/>
            <person name="Apweiler R."/>
            <person name="Aturaliya R.N."/>
            <person name="Bailey T.L."/>
            <person name="Bansal M."/>
            <person name="Baxter L."/>
            <person name="Beisel K.W."/>
            <person name="Bersano T."/>
            <person name="Bono H."/>
            <person name="Chalk A.M."/>
            <person name="Chiu K.P."/>
            <person name="Choudhary V."/>
            <person name="Christoffels A."/>
            <person name="Clutterbuck D.R."/>
            <person name="Crowe M.L."/>
            <person name="Dalla E."/>
            <person name="Dalrymple B.P."/>
            <person name="de Bono B."/>
            <person name="Della Gatta G."/>
            <person name="di Bernardo D."/>
            <person name="Down T."/>
            <person name="Engstrom P."/>
            <person name="Fagiolini M."/>
            <person name="Faulkner G."/>
            <person name="Fletcher C.F."/>
            <person name="Fukushima T."/>
            <person name="Furuno M."/>
            <person name="Futaki S."/>
            <person name="Gariboldi M."/>
            <person name="Georgii-Hemming P."/>
            <person name="Gingeras T.R."/>
            <person name="Gojobori T."/>
            <person name="Green R.E."/>
            <person name="Gustincich S."/>
            <person name="Harbers M."/>
            <person name="Hayashi Y."/>
            <person name="Hensch T.K."/>
            <person name="Hirokawa N."/>
            <person name="Hill D."/>
            <person name="Huminiecki L."/>
            <person name="Iacono M."/>
            <person name="Ikeo K."/>
            <person name="Iwama A."/>
            <person name="Ishikawa T."/>
            <person name="Jakt M."/>
            <person name="Kanapin A."/>
            <person name="Katoh M."/>
            <person name="Kawasawa Y."/>
            <person name="Kelso J."/>
            <person name="Kitamura H."/>
            <person name="Kitano H."/>
            <person name="Kollias G."/>
            <person name="Krishnan S.P."/>
            <person name="Kruger A."/>
            <person name="Kummerfeld S.K."/>
            <person name="Kurochkin I.V."/>
            <person name="Lareau L.F."/>
            <person name="Lazarevic D."/>
            <person name="Lipovich L."/>
            <person name="Liu J."/>
            <person name="Liuni S."/>
            <person name="McWilliam S."/>
            <person name="Madan Babu M."/>
            <person name="Madera M."/>
            <person name="Marchionni L."/>
            <person name="Matsuda H."/>
            <person name="Matsuzawa S."/>
            <person name="Miki H."/>
            <person name="Mignone F."/>
            <person name="Miyake S."/>
            <person name="Morris K."/>
            <person name="Mottagui-Tabar S."/>
            <person name="Mulder N."/>
            <person name="Nakano N."/>
            <person name="Nakauchi H."/>
            <person name="Ng P."/>
            <person name="Nilsson R."/>
            <person name="Nishiguchi S."/>
            <person name="Nishikawa S."/>
            <person name="Nori F."/>
            <person name="Ohara O."/>
            <person name="Okazaki Y."/>
            <person name="Orlando V."/>
            <person name="Pang K.C."/>
            <person name="Pavan W.J."/>
            <person name="Pavesi G."/>
            <person name="Pesole G."/>
            <person name="Petrovsky N."/>
            <person name="Piazza S."/>
            <person name="Reed J."/>
            <person name="Reid J.F."/>
            <person name="Ring B.Z."/>
            <person name="Ringwald M."/>
            <person name="Rost B."/>
            <person name="Ruan Y."/>
            <person name="Salzberg S.L."/>
            <person name="Sandelin A."/>
            <person name="Schneider C."/>
            <person name="Schoenbach C."/>
            <person name="Sekiguchi K."/>
            <person name="Semple C.A."/>
            <person name="Seno S."/>
            <person name="Sessa L."/>
            <person name="Sheng Y."/>
            <person name="Shibata Y."/>
            <person name="Shimada H."/>
            <person name="Shimada K."/>
            <person name="Silva D."/>
            <person name="Sinclair B."/>
            <person name="Sperling S."/>
            <person name="Stupka E."/>
            <person name="Sugiura K."/>
            <person name="Sultana R."/>
            <person name="Takenaka Y."/>
            <person name="Taki K."/>
            <person name="Tammoja K."/>
            <person name="Tan S.L."/>
            <person name="Tang S."/>
            <person name="Taylor M.S."/>
            <person name="Tegner J."/>
            <person name="Teichmann S.A."/>
            <person name="Ueda H.R."/>
            <person name="van Nimwegen E."/>
            <person name="Verardo R."/>
            <person name="Wei C.L."/>
            <person name="Yagi K."/>
            <person name="Yamanishi H."/>
            <person name="Zabarovsky E."/>
            <person name="Zhu S."/>
            <person name="Zimmer A."/>
            <person name="Hide W."/>
            <person name="Bult C."/>
            <person name="Grimmond S.M."/>
            <person name="Teasdale R.D."/>
            <person name="Liu E.T."/>
            <person name="Brusic V."/>
            <person name="Quackenbush J."/>
            <person name="Wahlestedt C."/>
            <person name="Mattick J.S."/>
            <person name="Hume D.A."/>
            <person name="Kai C."/>
            <person name="Sasaki D."/>
            <person name="Tomaru Y."/>
            <person name="Fukuda S."/>
            <person name="Kanamori-Katayama M."/>
            <person name="Suzuki M."/>
            <person name="Aoki J."/>
            <person name="Arakawa T."/>
            <person name="Iida J."/>
            <person name="Imamura K."/>
            <person name="Itoh M."/>
            <person name="Kato T."/>
            <person name="Kawaji H."/>
            <person name="Kawagashira N."/>
            <person name="Kawashima T."/>
            <person name="Kojima M."/>
            <person name="Kondo S."/>
            <person name="Konno H."/>
            <person name="Nakano K."/>
            <person name="Ninomiya N."/>
            <person name="Nishio T."/>
            <person name="Okada M."/>
            <person name="Plessy C."/>
            <person name="Shibata K."/>
            <person name="Shiraki T."/>
            <person name="Suzuki S."/>
            <person name="Tagami M."/>
            <person name="Waki K."/>
            <person name="Watahiki A."/>
            <person name="Okamura-Oho Y."/>
            <person name="Suzuki H."/>
            <person name="Kawai J."/>
            <person name="Hayashizaki Y."/>
        </authorList>
    </citation>
    <scope>NUCLEOTIDE SEQUENCE [LARGE SCALE MRNA] (ISOFORM 1)</scope>
    <source>
        <strain>C57BL/6J</strain>
        <tissue>Cecum</tissue>
    </source>
</reference>
<reference key="2">
    <citation type="journal article" date="2004" name="Genome Res.">
        <title>The status, quality, and expansion of the NIH full-length cDNA project: the Mammalian Gene Collection (MGC).</title>
        <authorList>
            <consortium name="The MGC Project Team"/>
        </authorList>
    </citation>
    <scope>NUCLEOTIDE SEQUENCE [LARGE SCALE MRNA] (ISOFORM 2)</scope>
    <scope>NUCLEOTIDE SEQUENCE [LARGE SCALE MRNA] OF 319-1072 (ISOFORM 1)</scope>
    <source>
        <strain>FVB/N</strain>
        <tissue>Colon</tissue>
        <tissue>Pancreas</tissue>
    </source>
</reference>
<dbReference type="EC" id="4.6.1.2" evidence="1"/>
<dbReference type="EMBL" id="AK136496">
    <property type="protein sequence ID" value="BAE23010.1"/>
    <property type="molecule type" value="mRNA"/>
</dbReference>
<dbReference type="EMBL" id="BC034064">
    <property type="protein sequence ID" value="AAH34064.1"/>
    <property type="molecule type" value="mRNA"/>
</dbReference>
<dbReference type="EMBL" id="BC099968">
    <property type="protein sequence ID" value="AAH99968.1"/>
    <property type="molecule type" value="mRNA"/>
</dbReference>
<dbReference type="CCDS" id="CCDS20653.1">
    <molecule id="Q3UWA6-2"/>
</dbReference>
<dbReference type="CCDS" id="CCDS51941.1">
    <molecule id="Q3UWA6-1"/>
</dbReference>
<dbReference type="RefSeq" id="NP_001120790.1">
    <molecule id="Q3UWA6-1"/>
    <property type="nucleotide sequence ID" value="NM_001127318.1"/>
</dbReference>
<dbReference type="RefSeq" id="NP_659504.2">
    <molecule id="Q3UWA6-2"/>
    <property type="nucleotide sequence ID" value="NM_145067.3"/>
</dbReference>
<dbReference type="SMR" id="Q3UWA6"/>
<dbReference type="BioGRID" id="200125">
    <property type="interactions" value="6"/>
</dbReference>
<dbReference type="FunCoup" id="Q3UWA6">
    <property type="interactions" value="1035"/>
</dbReference>
<dbReference type="STRING" id="10090.ENSMUSP00000032338"/>
<dbReference type="GuidetoPHARMACOLOGY" id="1750"/>
<dbReference type="GlyCosmos" id="Q3UWA6">
    <property type="glycosylation" value="10 sites, No reported glycans"/>
</dbReference>
<dbReference type="GlyGen" id="Q3UWA6">
    <property type="glycosylation" value="10 sites"/>
</dbReference>
<dbReference type="iPTMnet" id="Q3UWA6"/>
<dbReference type="PhosphoSitePlus" id="Q3UWA6"/>
<dbReference type="PaxDb" id="10090-ENSMUSP00000032338"/>
<dbReference type="PeptideAtlas" id="Q3UWA6"/>
<dbReference type="ProteomicsDB" id="269847">
    <molecule id="Q3UWA6-1"/>
</dbReference>
<dbReference type="ProteomicsDB" id="270872">
    <molecule id="Q3UWA6-2"/>
</dbReference>
<dbReference type="Antibodypedia" id="12046">
    <property type="antibodies" value="320 antibodies from 27 providers"/>
</dbReference>
<dbReference type="DNASU" id="14917"/>
<dbReference type="Ensembl" id="ENSMUST00000032338.10">
    <molecule id="Q3UWA6-1"/>
    <property type="protein sequence ID" value="ENSMUSP00000032338.8"/>
    <property type="gene ID" value="ENSMUSG00000042638.15"/>
</dbReference>
<dbReference type="Ensembl" id="ENSMUST00000078095.11">
    <molecule id="Q3UWA6-2"/>
    <property type="protein sequence ID" value="ENSMUSP00000077236.7"/>
    <property type="gene ID" value="ENSMUSG00000042638.15"/>
</dbReference>
<dbReference type="GeneID" id="14917"/>
<dbReference type="KEGG" id="mmu:14917"/>
<dbReference type="UCSC" id="uc009emb.2">
    <molecule id="Q3UWA6-2"/>
    <property type="organism name" value="mouse"/>
</dbReference>
<dbReference type="UCSC" id="uc009emc.2">
    <molecule id="Q3UWA6-1"/>
    <property type="organism name" value="mouse"/>
</dbReference>
<dbReference type="AGR" id="MGI:106903"/>
<dbReference type="CTD" id="2984"/>
<dbReference type="MGI" id="MGI:106903">
    <property type="gene designation" value="Gucy2c"/>
</dbReference>
<dbReference type="VEuPathDB" id="HostDB:ENSMUSG00000042638"/>
<dbReference type="eggNOG" id="KOG1023">
    <property type="taxonomic scope" value="Eukaryota"/>
</dbReference>
<dbReference type="GeneTree" id="ENSGT00940000155955"/>
<dbReference type="HOGENOM" id="CLU_001072_1_3_1"/>
<dbReference type="InParanoid" id="Q3UWA6"/>
<dbReference type="OMA" id="KFAHAFK"/>
<dbReference type="OrthoDB" id="60033at2759"/>
<dbReference type="PhylomeDB" id="Q3UWA6"/>
<dbReference type="TreeFam" id="TF106338"/>
<dbReference type="BRENDA" id="4.6.1.2">
    <property type="organism ID" value="3474"/>
</dbReference>
<dbReference type="Reactome" id="R-MMU-8935690">
    <property type="pathway name" value="Digestion"/>
</dbReference>
<dbReference type="BioGRID-ORCS" id="14917">
    <property type="hits" value="2 hits in 80 CRISPR screens"/>
</dbReference>
<dbReference type="ChiTaRS" id="Gucy2c">
    <property type="organism name" value="mouse"/>
</dbReference>
<dbReference type="PRO" id="PR:Q3UWA6"/>
<dbReference type="Proteomes" id="UP000000589">
    <property type="component" value="Chromosome 6"/>
</dbReference>
<dbReference type="RNAct" id="Q3UWA6">
    <property type="molecule type" value="protein"/>
</dbReference>
<dbReference type="Bgee" id="ENSMUSG00000042638">
    <property type="expression patterns" value="Expressed in jejunum and 39 other cell types or tissues"/>
</dbReference>
<dbReference type="GO" id="GO:0005789">
    <property type="term" value="C:endoplasmic reticulum membrane"/>
    <property type="evidence" value="ECO:0007669"/>
    <property type="project" value="UniProtKB-SubCell"/>
</dbReference>
<dbReference type="GO" id="GO:0005886">
    <property type="term" value="C:plasma membrane"/>
    <property type="evidence" value="ECO:0007669"/>
    <property type="project" value="UniProtKB-SubCell"/>
</dbReference>
<dbReference type="GO" id="GO:0005524">
    <property type="term" value="F:ATP binding"/>
    <property type="evidence" value="ECO:0007669"/>
    <property type="project" value="InterPro"/>
</dbReference>
<dbReference type="GO" id="GO:0005525">
    <property type="term" value="F:GTP binding"/>
    <property type="evidence" value="ECO:0007669"/>
    <property type="project" value="UniProtKB-KW"/>
</dbReference>
<dbReference type="GO" id="GO:0004383">
    <property type="term" value="F:guanylate cyclase activity"/>
    <property type="evidence" value="ECO:0000315"/>
    <property type="project" value="MGI"/>
</dbReference>
<dbReference type="GO" id="GO:0004672">
    <property type="term" value="F:protein kinase activity"/>
    <property type="evidence" value="ECO:0007669"/>
    <property type="project" value="InterPro"/>
</dbReference>
<dbReference type="GO" id="GO:0015643">
    <property type="term" value="F:toxic substance binding"/>
    <property type="evidence" value="ECO:0007669"/>
    <property type="project" value="Ensembl"/>
</dbReference>
<dbReference type="GO" id="GO:0035556">
    <property type="term" value="P:intracellular signal transduction"/>
    <property type="evidence" value="ECO:0007669"/>
    <property type="project" value="InterPro"/>
</dbReference>
<dbReference type="GO" id="GO:0042127">
    <property type="term" value="P:regulation of cell population proliferation"/>
    <property type="evidence" value="ECO:0000316"/>
    <property type="project" value="MGI"/>
</dbReference>
<dbReference type="GO" id="GO:0009636">
    <property type="term" value="P:response to toxic substance"/>
    <property type="evidence" value="ECO:0000315"/>
    <property type="project" value="MGI"/>
</dbReference>
<dbReference type="CDD" id="cd07302">
    <property type="entry name" value="CHD"/>
    <property type="match status" value="1"/>
</dbReference>
<dbReference type="FunFam" id="1.10.510.10:FF:000364">
    <property type="entry name" value="Guanylate cyclase"/>
    <property type="match status" value="1"/>
</dbReference>
<dbReference type="FunFam" id="3.30.70.1230:FF:000015">
    <property type="entry name" value="Guanylate cyclase"/>
    <property type="match status" value="1"/>
</dbReference>
<dbReference type="FunFam" id="3.40.50.2300:FF:000185">
    <property type="entry name" value="Guanylate cyclase"/>
    <property type="match status" value="1"/>
</dbReference>
<dbReference type="Gene3D" id="3.40.50.2300">
    <property type="match status" value="1"/>
</dbReference>
<dbReference type="Gene3D" id="3.30.70.1230">
    <property type="entry name" value="Nucleotide cyclase"/>
    <property type="match status" value="1"/>
</dbReference>
<dbReference type="Gene3D" id="1.10.510.10">
    <property type="entry name" value="Transferase(Phosphotransferase) domain 1"/>
    <property type="match status" value="1"/>
</dbReference>
<dbReference type="InterPro" id="IPR001054">
    <property type="entry name" value="A/G_cyclase"/>
</dbReference>
<dbReference type="InterPro" id="IPR018297">
    <property type="entry name" value="A/G_cyclase_CS"/>
</dbReference>
<dbReference type="InterPro" id="IPR001828">
    <property type="entry name" value="ANF_lig-bd_rcpt"/>
</dbReference>
<dbReference type="InterPro" id="IPR050401">
    <property type="entry name" value="Cyclic_nucleotide_synthase"/>
</dbReference>
<dbReference type="InterPro" id="IPR011009">
    <property type="entry name" value="Kinase-like_dom_sf"/>
</dbReference>
<dbReference type="InterPro" id="IPR029787">
    <property type="entry name" value="Nucleotide_cyclase"/>
</dbReference>
<dbReference type="InterPro" id="IPR028082">
    <property type="entry name" value="Peripla_BP_I"/>
</dbReference>
<dbReference type="InterPro" id="IPR000719">
    <property type="entry name" value="Prot_kinase_dom"/>
</dbReference>
<dbReference type="InterPro" id="IPR001245">
    <property type="entry name" value="Ser-Thr/Tyr_kinase_cat_dom"/>
</dbReference>
<dbReference type="PANTHER" id="PTHR11920">
    <property type="entry name" value="GUANYLYL CYCLASE"/>
    <property type="match status" value="1"/>
</dbReference>
<dbReference type="PANTHER" id="PTHR11920:SF347">
    <property type="entry name" value="GUANYLYL CYCLASE C"/>
    <property type="match status" value="1"/>
</dbReference>
<dbReference type="Pfam" id="PF01094">
    <property type="entry name" value="ANF_receptor"/>
    <property type="match status" value="1"/>
</dbReference>
<dbReference type="Pfam" id="PF00211">
    <property type="entry name" value="Guanylate_cyc"/>
    <property type="match status" value="1"/>
</dbReference>
<dbReference type="Pfam" id="PF07714">
    <property type="entry name" value="PK_Tyr_Ser-Thr"/>
    <property type="match status" value="1"/>
</dbReference>
<dbReference type="SMART" id="SM00044">
    <property type="entry name" value="CYCc"/>
    <property type="match status" value="1"/>
</dbReference>
<dbReference type="SUPFAM" id="SSF55073">
    <property type="entry name" value="Nucleotide cyclase"/>
    <property type="match status" value="1"/>
</dbReference>
<dbReference type="SUPFAM" id="SSF53822">
    <property type="entry name" value="Periplasmic binding protein-like I"/>
    <property type="match status" value="1"/>
</dbReference>
<dbReference type="SUPFAM" id="SSF56112">
    <property type="entry name" value="Protein kinase-like (PK-like)"/>
    <property type="match status" value="1"/>
</dbReference>
<dbReference type="PROSITE" id="PS00452">
    <property type="entry name" value="GUANYLATE_CYCLASE_1"/>
    <property type="match status" value="1"/>
</dbReference>
<dbReference type="PROSITE" id="PS50125">
    <property type="entry name" value="GUANYLATE_CYCLASE_2"/>
    <property type="match status" value="1"/>
</dbReference>
<dbReference type="PROSITE" id="PS50011">
    <property type="entry name" value="PROTEIN_KINASE_DOM"/>
    <property type="match status" value="1"/>
</dbReference>
<organism>
    <name type="scientific">Mus musculus</name>
    <name type="common">Mouse</name>
    <dbReference type="NCBI Taxonomy" id="10090"/>
    <lineage>
        <taxon>Eukaryota</taxon>
        <taxon>Metazoa</taxon>
        <taxon>Chordata</taxon>
        <taxon>Craniata</taxon>
        <taxon>Vertebrata</taxon>
        <taxon>Euteleostomi</taxon>
        <taxon>Mammalia</taxon>
        <taxon>Eutheria</taxon>
        <taxon>Euarchontoglires</taxon>
        <taxon>Glires</taxon>
        <taxon>Rodentia</taxon>
        <taxon>Myomorpha</taxon>
        <taxon>Muroidea</taxon>
        <taxon>Muridae</taxon>
        <taxon>Murinae</taxon>
        <taxon>Mus</taxon>
        <taxon>Mus</taxon>
    </lineage>
</organism>
<feature type="signal peptide" evidence="2">
    <location>
        <begin position="1"/>
        <end position="19"/>
    </location>
</feature>
<feature type="chain" id="PRO_0000280396" description="Guanylyl cyclase C">
    <location>
        <begin position="20"/>
        <end position="1072"/>
    </location>
</feature>
<feature type="topological domain" description="Extracellular" evidence="2">
    <location>
        <begin position="20"/>
        <end position="433"/>
    </location>
</feature>
<feature type="transmembrane region" description="Helical" evidence="2">
    <location>
        <begin position="434"/>
        <end position="454"/>
    </location>
</feature>
<feature type="topological domain" description="Cytoplasmic" evidence="2">
    <location>
        <begin position="455"/>
        <end position="1072"/>
    </location>
</feature>
<feature type="domain" description="Protein kinase" evidence="4">
    <location>
        <begin position="489"/>
        <end position="748"/>
    </location>
</feature>
<feature type="domain" description="Guanylate cyclase" evidence="3">
    <location>
        <begin position="823"/>
        <end position="953"/>
    </location>
</feature>
<feature type="glycosylation site" description="N-linked (GlcNAc...) asparagine" evidence="2">
    <location>
        <position position="32"/>
    </location>
</feature>
<feature type="glycosylation site" description="N-linked (GlcNAc...) asparagine" evidence="2">
    <location>
        <position position="75"/>
    </location>
</feature>
<feature type="glycosylation site" description="N-linked (GlcNAc...) asparagine" evidence="2">
    <location>
        <position position="79"/>
    </location>
</feature>
<feature type="glycosylation site" description="N-linked (GlcNAc...) asparagine" evidence="2">
    <location>
        <position position="179"/>
    </location>
</feature>
<feature type="glycosylation site" description="N-linked (GlcNAc...) asparagine" evidence="2">
    <location>
        <position position="188"/>
    </location>
</feature>
<feature type="glycosylation site" description="N-linked (GlcNAc...) asparagine" evidence="2">
    <location>
        <position position="195"/>
    </location>
</feature>
<feature type="glycosylation site" description="N-linked (GlcNAc...) asparagine" evidence="2">
    <location>
        <position position="284"/>
    </location>
</feature>
<feature type="glycosylation site" description="N-linked (GlcNAc...) asparagine" evidence="2">
    <location>
        <position position="307"/>
    </location>
</feature>
<feature type="glycosylation site" description="N-linked (GlcNAc...) asparagine" evidence="2">
    <location>
        <position position="345"/>
    </location>
</feature>
<feature type="glycosylation site" description="N-linked (GlcNAc...) asparagine" evidence="2">
    <location>
        <position position="402"/>
    </location>
</feature>
<feature type="splice variant" id="VSP_023652" description="In isoform 2." evidence="5">
    <location>
        <begin position="512"/>
        <end position="535"/>
    </location>
</feature>
<feature type="sequence conflict" description="In Ref. 2; AAH34064." evidence="6" ref="2">
    <original>L</original>
    <variation>F</variation>
    <location>
        <position position="381"/>
    </location>
</feature>
<feature type="sequence conflict" description="In Ref. 2; AAH34064/AAH99968." evidence="6" ref="2">
    <original>T</original>
    <variation>A</variation>
    <location>
        <position position="969"/>
    </location>
</feature>
<protein>
    <recommendedName>
        <fullName>Guanylyl cyclase C</fullName>
        <shortName>GC-C</shortName>
        <ecNumber evidence="1">4.6.1.2</ecNumber>
    </recommendedName>
    <alternativeName>
        <fullName>Heat-stable enterotoxin receptor</fullName>
        <shortName>STA receptor</shortName>
    </alternativeName>
    <alternativeName>
        <fullName>Intestinal guanylate cyclase</fullName>
    </alternativeName>
</protein>
<accession>Q3UWA6</accession>
<accession>Q499D2</accession>
<accession>Q8JZQ6</accession>
<comment type="function">
    <text evidence="1">Guanylyl cyclase that catalyzes synthesis of cyclic GMP (cGMP) from GTP.</text>
</comment>
<comment type="catalytic activity">
    <reaction evidence="1">
        <text>GTP = 3',5'-cyclic GMP + diphosphate</text>
        <dbReference type="Rhea" id="RHEA:13665"/>
        <dbReference type="ChEBI" id="CHEBI:33019"/>
        <dbReference type="ChEBI" id="CHEBI:37565"/>
        <dbReference type="ChEBI" id="CHEBI:57746"/>
        <dbReference type="EC" id="4.6.1.2"/>
    </reaction>
    <physiologicalReaction direction="left-to-right" evidence="1">
        <dbReference type="Rhea" id="RHEA:13666"/>
    </physiologicalReaction>
</comment>
<comment type="subunit">
    <text evidence="1">Homotrimer. Interacts via its C-terminal region with NHERF4. Interacts with the lectin chaperone VIP36.</text>
</comment>
<comment type="subcellular location">
    <subcellularLocation>
        <location evidence="1">Cell membrane</location>
        <topology evidence="1">Single-pass type I membrane protein</topology>
    </subcellularLocation>
    <subcellularLocation>
        <location evidence="1">Endoplasmic reticulum membrane</location>
        <topology evidence="1">Single-pass type I membrane protein</topology>
    </subcellularLocation>
    <text evidence="1">The 145 kDa plasma membrane form of GUCY2C contains sialic acid and galactose residues, while a differencially glycosylated 130 Kda form is a high mannose form that is resident in the endoplasmic reticulum and may serve as the precursor for the cell surface form.</text>
</comment>
<comment type="alternative products">
    <event type="alternative splicing"/>
    <isoform>
        <id>Q3UWA6-1</id>
        <name>1</name>
        <sequence type="displayed"/>
    </isoform>
    <isoform>
        <id>Q3UWA6-2</id>
        <name>2</name>
        <sequence type="described" ref="VSP_023652"/>
    </isoform>
</comment>
<comment type="domain">
    <text evidence="6">The protein kinase domain is predicted to be catalytically inactive.</text>
</comment>
<comment type="PTM">
    <text evidence="1">Glycosylation at Asn-75 and/or Asn-79 is required for interaction with VIP36 while glycosylation at Asn-345 and Asn-402 modulates ligand-mediated GC-C activation.</text>
</comment>
<comment type="similarity">
    <text evidence="3">Belongs to the adenylyl cyclase class-4/guanylyl cyclase family.</text>
</comment>
<proteinExistence type="evidence at transcript level"/>
<keyword id="KW-0025">Alternative splicing</keyword>
<keyword id="KW-1003">Cell membrane</keyword>
<keyword id="KW-0141">cGMP biosynthesis</keyword>
<keyword id="KW-0256">Endoplasmic reticulum</keyword>
<keyword id="KW-0325">Glycoprotein</keyword>
<keyword id="KW-0342">GTP-binding</keyword>
<keyword id="KW-0456">Lyase</keyword>
<keyword id="KW-0472">Membrane</keyword>
<keyword id="KW-0547">Nucleotide-binding</keyword>
<keyword id="KW-0675">Receptor</keyword>
<keyword id="KW-1185">Reference proteome</keyword>
<keyword id="KW-0732">Signal</keyword>
<keyword id="KW-0812">Transmembrane</keyword>
<keyword id="KW-1133">Transmembrane helix</keyword>